<protein>
    <recommendedName>
        <fullName>Tumor necrosis factor</fullName>
    </recommendedName>
    <alternativeName>
        <fullName>Cachectin</fullName>
    </alternativeName>
    <alternativeName>
        <fullName>TNF-alpha</fullName>
    </alternativeName>
    <alternativeName>
        <fullName>Tumor necrosis factor ligand superfamily member 2</fullName>
        <shortName>TNF-a</shortName>
    </alternativeName>
    <component>
        <recommendedName>
            <fullName>Tumor necrosis factor, membrane form</fullName>
        </recommendedName>
        <alternativeName>
            <fullName>N-terminal fragment</fullName>
            <shortName>NTF</shortName>
        </alternativeName>
    </component>
    <component>
        <recommendedName>
            <fullName>Intracellular domain 1</fullName>
            <shortName>ICD1</shortName>
        </recommendedName>
    </component>
    <component>
        <recommendedName>
            <fullName>Intracellular domain 2</fullName>
            <shortName>ICD2</shortName>
        </recommendedName>
    </component>
    <component>
        <recommendedName>
            <fullName>C-domain 1</fullName>
        </recommendedName>
    </component>
    <component>
        <recommendedName>
            <fullName>C-domain 2</fullName>
        </recommendedName>
    </component>
    <component>
        <recommendedName>
            <fullName>Tumor necrosis factor, soluble form</fullName>
        </recommendedName>
    </component>
</protein>
<proteinExistence type="evidence at transcript level"/>
<name>TNFA_SHEEP</name>
<reference key="1">
    <citation type="journal article" date="1990" name="Nucleic Acids Res.">
        <title>Primary structure of ovine tumor necrosis factor alpha cDNA.</title>
        <authorList>
            <person name="Young A.J."/>
            <person name="Hay J.B."/>
            <person name="Chan J.Y.C."/>
        </authorList>
    </citation>
    <scope>NUCLEOTIDE SEQUENCE [MRNA]</scope>
    <source>
        <tissue>Liver</tissue>
    </source>
</reference>
<reference key="2">
    <citation type="journal article" date="1991" name="Gene">
        <title>Sequence of the cDNA encoding ovine tumor necrosis factor-alpha: problems with cloning by inverse PCR.</title>
        <authorList>
            <person name="Green I.R."/>
            <person name="Sargan D.R."/>
        </authorList>
    </citation>
    <scope>NUCLEOTIDE SEQUENCE [MRNA]</scope>
    <source>
        <tissue>Alveolar macrophage</tissue>
    </source>
</reference>
<reference key="3">
    <citation type="journal article" date="1991" name="Immunol. Cell Biol.">
        <title>Molecular cloning, expression and characterization of ovine TNF alpha.</title>
        <authorList>
            <person name="Andrews A.E."/>
            <person name="Nash A.D."/>
            <person name="Barcham G.J."/>
            <person name="Brandon M.R."/>
        </authorList>
    </citation>
    <scope>NUCLEOTIDE SEQUENCE [MRNA]</scope>
</reference>
<dbReference type="EMBL" id="X55966">
    <property type="protein sequence ID" value="CAA39437.1"/>
    <property type="molecule type" value="mRNA"/>
</dbReference>
<dbReference type="EMBL" id="X55152">
    <property type="protein sequence ID" value="CAA38952.1"/>
    <property type="molecule type" value="mRNA"/>
</dbReference>
<dbReference type="EMBL" id="X56756">
    <property type="protein sequence ID" value="CAA40076.1"/>
    <property type="molecule type" value="mRNA"/>
</dbReference>
<dbReference type="PIR" id="JH0529">
    <property type="entry name" value="JH0529"/>
</dbReference>
<dbReference type="RefSeq" id="NP_001020031.1">
    <property type="nucleotide sequence ID" value="NM_001024860.1"/>
</dbReference>
<dbReference type="SMR" id="P23383"/>
<dbReference type="STRING" id="9940.ENSOARP00000008936"/>
<dbReference type="GlyCosmos" id="P23383">
    <property type="glycosylation" value="2 sites, No reported glycans"/>
</dbReference>
<dbReference type="PaxDb" id="9940-ENSOARP00000008936"/>
<dbReference type="GeneID" id="443540"/>
<dbReference type="KEGG" id="oas:443540"/>
<dbReference type="CTD" id="7124"/>
<dbReference type="eggNOG" id="ENOG502S4K8">
    <property type="taxonomic scope" value="Eukaryota"/>
</dbReference>
<dbReference type="HOGENOM" id="CLU_070352_3_1_1"/>
<dbReference type="OMA" id="GATMLFC"/>
<dbReference type="OrthoDB" id="9940698at2759"/>
<dbReference type="Proteomes" id="UP000002356">
    <property type="component" value="Chromosome 20"/>
</dbReference>
<dbReference type="Bgee" id="ENSOARG00000008333">
    <property type="expression patterns" value="Expressed in gastric lymph node and 50 other cell types or tissues"/>
</dbReference>
<dbReference type="ExpressionAtlas" id="P23383">
    <property type="expression patterns" value="baseline"/>
</dbReference>
<dbReference type="GO" id="GO:0009986">
    <property type="term" value="C:cell surface"/>
    <property type="evidence" value="ECO:0007669"/>
    <property type="project" value="TreeGrafter"/>
</dbReference>
<dbReference type="GO" id="GO:0005615">
    <property type="term" value="C:extracellular space"/>
    <property type="evidence" value="ECO:0007669"/>
    <property type="project" value="UniProtKB-KW"/>
</dbReference>
<dbReference type="GO" id="GO:0005886">
    <property type="term" value="C:plasma membrane"/>
    <property type="evidence" value="ECO:0007669"/>
    <property type="project" value="UniProtKB-SubCell"/>
</dbReference>
<dbReference type="GO" id="GO:0005125">
    <property type="term" value="F:cytokine activity"/>
    <property type="evidence" value="ECO:0007669"/>
    <property type="project" value="UniProtKB-KW"/>
</dbReference>
<dbReference type="GO" id="GO:0005164">
    <property type="term" value="F:tumor necrosis factor receptor binding"/>
    <property type="evidence" value="ECO:0007669"/>
    <property type="project" value="InterPro"/>
</dbReference>
<dbReference type="GO" id="GO:0008625">
    <property type="term" value="P:extrinsic apoptotic signaling pathway via death domain receptors"/>
    <property type="evidence" value="ECO:0007669"/>
    <property type="project" value="TreeGrafter"/>
</dbReference>
<dbReference type="GO" id="GO:0006955">
    <property type="term" value="P:immune response"/>
    <property type="evidence" value="ECO:0007669"/>
    <property type="project" value="InterPro"/>
</dbReference>
<dbReference type="GO" id="GO:0097527">
    <property type="term" value="P:necroptotic signaling pathway"/>
    <property type="evidence" value="ECO:0000250"/>
    <property type="project" value="UniProtKB"/>
</dbReference>
<dbReference type="GO" id="GO:0043123">
    <property type="term" value="P:positive regulation of canonical NF-kappaB signal transduction"/>
    <property type="evidence" value="ECO:0007669"/>
    <property type="project" value="TreeGrafter"/>
</dbReference>
<dbReference type="GO" id="GO:2001238">
    <property type="term" value="P:positive regulation of extrinsic apoptotic signaling pathway"/>
    <property type="evidence" value="ECO:0007669"/>
    <property type="project" value="TreeGrafter"/>
</dbReference>
<dbReference type="GO" id="GO:0051092">
    <property type="term" value="P:positive regulation of NF-kappaB transcription factor activity"/>
    <property type="evidence" value="ECO:0000250"/>
    <property type="project" value="UniProtKB"/>
</dbReference>
<dbReference type="GO" id="GO:0045944">
    <property type="term" value="P:positive regulation of transcription by RNA polymerase II"/>
    <property type="evidence" value="ECO:0007669"/>
    <property type="project" value="TreeGrafter"/>
</dbReference>
<dbReference type="GO" id="GO:0065008">
    <property type="term" value="P:regulation of biological quality"/>
    <property type="evidence" value="ECO:0007669"/>
    <property type="project" value="UniProtKB-ARBA"/>
</dbReference>
<dbReference type="GO" id="GO:0050793">
    <property type="term" value="P:regulation of developmental process"/>
    <property type="evidence" value="ECO:0007669"/>
    <property type="project" value="UniProtKB-ARBA"/>
</dbReference>
<dbReference type="GO" id="GO:0051239">
    <property type="term" value="P:regulation of multicellular organismal process"/>
    <property type="evidence" value="ECO:0007669"/>
    <property type="project" value="UniProtKB-ARBA"/>
</dbReference>
<dbReference type="GO" id="GO:0051046">
    <property type="term" value="P:regulation of secretion"/>
    <property type="evidence" value="ECO:0007669"/>
    <property type="project" value="UniProtKB-ARBA"/>
</dbReference>
<dbReference type="GO" id="GO:0033209">
    <property type="term" value="P:tumor necrosis factor-mediated signaling pathway"/>
    <property type="evidence" value="ECO:0007669"/>
    <property type="project" value="TreeGrafter"/>
</dbReference>
<dbReference type="GO" id="GO:0010573">
    <property type="term" value="P:vascular endothelial growth factor production"/>
    <property type="evidence" value="ECO:0000250"/>
    <property type="project" value="UniProtKB"/>
</dbReference>
<dbReference type="CDD" id="cd00184">
    <property type="entry name" value="TNF"/>
    <property type="match status" value="1"/>
</dbReference>
<dbReference type="FunFam" id="2.60.120.40:FF:000007">
    <property type="entry name" value="Tumor necrosis factor"/>
    <property type="match status" value="1"/>
</dbReference>
<dbReference type="Gene3D" id="2.60.120.40">
    <property type="match status" value="1"/>
</dbReference>
<dbReference type="InterPro" id="IPR006053">
    <property type="entry name" value="TNF"/>
</dbReference>
<dbReference type="InterPro" id="IPR002959">
    <property type="entry name" value="TNF_alpha"/>
</dbReference>
<dbReference type="InterPro" id="IPR021184">
    <property type="entry name" value="TNF_CS"/>
</dbReference>
<dbReference type="InterPro" id="IPR006052">
    <property type="entry name" value="TNF_dom"/>
</dbReference>
<dbReference type="InterPro" id="IPR008983">
    <property type="entry name" value="Tumour_necrosis_fac-like_dom"/>
</dbReference>
<dbReference type="PANTHER" id="PTHR11471:SF23">
    <property type="entry name" value="TUMOR NECROSIS FACTOR"/>
    <property type="match status" value="1"/>
</dbReference>
<dbReference type="PANTHER" id="PTHR11471">
    <property type="entry name" value="TUMOR NECROSIS FACTOR FAMILY MEMBER"/>
    <property type="match status" value="1"/>
</dbReference>
<dbReference type="Pfam" id="PF00229">
    <property type="entry name" value="TNF"/>
    <property type="match status" value="1"/>
</dbReference>
<dbReference type="PRINTS" id="PR01234">
    <property type="entry name" value="TNECROSISFCT"/>
</dbReference>
<dbReference type="PRINTS" id="PR01235">
    <property type="entry name" value="TNFALPHA"/>
</dbReference>
<dbReference type="SMART" id="SM00207">
    <property type="entry name" value="TNF"/>
    <property type="match status" value="1"/>
</dbReference>
<dbReference type="SUPFAM" id="SSF49842">
    <property type="entry name" value="TNF-like"/>
    <property type="match status" value="1"/>
</dbReference>
<dbReference type="PROSITE" id="PS00251">
    <property type="entry name" value="THD_1"/>
    <property type="match status" value="1"/>
</dbReference>
<dbReference type="PROSITE" id="PS50049">
    <property type="entry name" value="THD_2"/>
    <property type="match status" value="1"/>
</dbReference>
<feature type="chain" id="PRO_0000034455" description="Tumor necrosis factor, membrane form">
    <location>
        <begin position="1"/>
        <end position="234"/>
    </location>
</feature>
<feature type="chain" id="PRO_0000417295" description="Intracellular domain 1" evidence="1">
    <location>
        <begin position="1"/>
        <end position="39"/>
    </location>
</feature>
<feature type="chain" id="PRO_0000417296" description="Intracellular domain 2" evidence="1">
    <location>
        <begin position="1"/>
        <end position="35"/>
    </location>
</feature>
<feature type="chain" id="PRO_0000417297" description="C-domain 1" evidence="1">
    <location>
        <begin position="50"/>
        <end status="unknown"/>
    </location>
</feature>
<feature type="chain" id="PRO_0000417298" description="C-domain 2" evidence="1">
    <location>
        <begin position="52"/>
        <end status="unknown"/>
    </location>
</feature>
<feature type="chain" id="PRO_0000034456" description="Tumor necrosis factor, soluble form">
    <location>
        <begin position="78"/>
        <end position="234"/>
    </location>
</feature>
<feature type="topological domain" description="Cytoplasmic" evidence="4">
    <location>
        <begin position="1"/>
        <end position="35"/>
    </location>
</feature>
<feature type="transmembrane region" description="Helical; Signal-anchor for type II membrane protein" evidence="4">
    <location>
        <begin position="36"/>
        <end position="56"/>
    </location>
</feature>
<feature type="topological domain" description="Extracellular" evidence="4">
    <location>
        <begin position="57"/>
        <end position="234"/>
    </location>
</feature>
<feature type="domain" description="THD" evidence="5">
    <location>
        <begin position="89"/>
        <end position="234"/>
    </location>
</feature>
<feature type="site" description="Cleavage; by SPPL2A or SPPL2B" evidence="1">
    <location>
        <begin position="34"/>
        <end position="35"/>
    </location>
</feature>
<feature type="site" description="Cleavage; by SPPL2A or SPPL2B" evidence="1">
    <location>
        <begin position="39"/>
        <end position="40"/>
    </location>
</feature>
<feature type="site" description="Cleavage; by SPPL2A or SPPL2B" evidence="1">
    <location>
        <begin position="49"/>
        <end position="50"/>
    </location>
</feature>
<feature type="site" description="Cleavage; by SPPL2A or SPPL2B" evidence="1">
    <location>
        <begin position="51"/>
        <end position="52"/>
    </location>
</feature>
<feature type="site" description="Cleavage; by ADAM17" evidence="1">
    <location>
        <begin position="77"/>
        <end position="78"/>
    </location>
</feature>
<feature type="modified residue" description="Phosphoserine; by CK1" evidence="1">
    <location>
        <position position="2"/>
    </location>
</feature>
<feature type="lipid moiety-binding region" description="N6-myristoyl lysine" evidence="2">
    <location>
        <position position="20"/>
    </location>
</feature>
<feature type="glycosylation site" description="O-linked (GalNAc...) serine; in soluble form" evidence="1">
    <location>
        <position position="81"/>
    </location>
</feature>
<feature type="glycosylation site" description="N-linked (GlcNAc...) asparagine" evidence="4">
    <location>
        <position position="96"/>
    </location>
</feature>
<feature type="disulfide bond" evidence="5">
    <location>
        <begin position="146"/>
        <end position="178"/>
    </location>
</feature>
<feature type="sequence conflict" description="In Ref. 1; CAA39437." evidence="6" ref="1">
    <location>
        <position position="63"/>
    </location>
</feature>
<organism>
    <name type="scientific">Ovis aries</name>
    <name type="common">Sheep</name>
    <dbReference type="NCBI Taxonomy" id="9940"/>
    <lineage>
        <taxon>Eukaryota</taxon>
        <taxon>Metazoa</taxon>
        <taxon>Chordata</taxon>
        <taxon>Craniata</taxon>
        <taxon>Vertebrata</taxon>
        <taxon>Euteleostomi</taxon>
        <taxon>Mammalia</taxon>
        <taxon>Eutheria</taxon>
        <taxon>Laurasiatheria</taxon>
        <taxon>Artiodactyla</taxon>
        <taxon>Ruminantia</taxon>
        <taxon>Pecora</taxon>
        <taxon>Bovidae</taxon>
        <taxon>Caprinae</taxon>
        <taxon>Ovis</taxon>
    </lineage>
</organism>
<comment type="function">
    <text evidence="2 3">Cytokine that binds to TNFRSF1A/TNFR1 and TNFRSF1B/TNFBR. It is mainly secreted by macrophages and can induce cell death of certain tumor cell lines. It is potent pyrogen causing fever by direct action or by stimulation of interleukin-1 secretion and is implicated in the induction of cachexia, Under certain conditions it can stimulate cell proliferation and induce cell differentiation (By similarity). Induces insulin resistance in adipocytes via inhibition of insulin-induced IRS1 tyrosine phosphorylation and insulin-induced glucose uptake. Induces GKAP42 protein degradation in adipocytes which is partially responsible for TNF-induced insulin resistance (By similarity). Plays a role in angiogenesis by inducing VEGF production synergistically with IL1B and IL6 (By similarity). Promotes osteoclastogenesis and therefore mediates bone resorption (By similarity).</text>
</comment>
<comment type="function">
    <text evidence="2">The TNF intracellular domain (ICD) form induces IL12 production in dendritic cells.</text>
</comment>
<comment type="subunit">
    <text evidence="1">Homotrimer. Interacts with SPPL2B (By similarity).</text>
</comment>
<comment type="subcellular location">
    <subcellularLocation>
        <location evidence="1">Cell membrane</location>
        <topology evidence="1">Single-pass type II membrane protein</topology>
    </subcellularLocation>
</comment>
<comment type="subcellular location">
    <molecule>Tumor necrosis factor, membrane form</molecule>
    <subcellularLocation>
        <location evidence="1">Membrane</location>
        <topology evidence="1">Single-pass type II membrane protein</topology>
    </subcellularLocation>
</comment>
<comment type="subcellular location">
    <molecule>Tumor necrosis factor, soluble form</molecule>
    <subcellularLocation>
        <location evidence="1">Secreted</location>
    </subcellularLocation>
</comment>
<comment type="subcellular location">
    <molecule>C-domain 1</molecule>
    <subcellularLocation>
        <location evidence="1">Secreted</location>
    </subcellularLocation>
</comment>
<comment type="subcellular location">
    <molecule>C-domain 2</molecule>
    <subcellularLocation>
        <location evidence="1">Secreted</location>
    </subcellularLocation>
</comment>
<comment type="PTM">
    <text evidence="1">The soluble form derives from the membrane form by proteolytic processing. The membrane-bound form is further proteolytically processed by SPPL2A or SPPL2B through regulated intramembrane proteolysis producing TNF intracellular domains (ICD1 and ICD2) released in the cytosol and TNF C-domain 1 and C-domain 2 secreted into the extracellular space (By similarity).</text>
</comment>
<comment type="PTM">
    <text evidence="1">The membrane form, but not the soluble form, is phosphorylated on serine residues. Dephosphorylation of the membrane form occurs by binding to soluble TNFRSF1A/TNFR1 (By similarity).</text>
</comment>
<comment type="PTM">
    <text evidence="1">O-glycosylated; glycans contain galactose, N-acetylgalactosamine and N-acetylneuraminic acid.</text>
</comment>
<comment type="PTM">
    <molecule>Tumor necrosis factor, soluble form</molecule>
    <text evidence="2">The soluble form is demyristoylated by SIRT6, promoting its secretion.</text>
</comment>
<comment type="similarity">
    <text evidence="6">Belongs to the tumor necrosis factor family.</text>
</comment>
<gene>
    <name type="primary">TNF</name>
    <name type="synonym">TNFA</name>
    <name type="synonym">TNFSF2</name>
</gene>
<evidence type="ECO:0000250" key="1"/>
<evidence type="ECO:0000250" key="2">
    <source>
        <dbReference type="UniProtKB" id="P01375"/>
    </source>
</evidence>
<evidence type="ECO:0000250" key="3">
    <source>
        <dbReference type="UniProtKB" id="P06804"/>
    </source>
</evidence>
<evidence type="ECO:0000255" key="4"/>
<evidence type="ECO:0000255" key="5">
    <source>
        <dbReference type="PROSITE-ProRule" id="PRU01387"/>
    </source>
</evidence>
<evidence type="ECO:0000305" key="6"/>
<keyword id="KW-1003">Cell membrane</keyword>
<keyword id="KW-0202">Cytokine</keyword>
<keyword id="KW-1015">Disulfide bond</keyword>
<keyword id="KW-0325">Glycoprotein</keyword>
<keyword id="KW-0449">Lipoprotein</keyword>
<keyword id="KW-0472">Membrane</keyword>
<keyword id="KW-0519">Myristate</keyword>
<keyword id="KW-0597">Phosphoprotein</keyword>
<keyword id="KW-1185">Reference proteome</keyword>
<keyword id="KW-0964">Secreted</keyword>
<keyword id="KW-0735">Signal-anchor</keyword>
<keyword id="KW-0812">Transmembrane</keyword>
<keyword id="KW-1133">Transmembrane helix</keyword>
<sequence length="234" mass="25536">MSTKSMIRDVELAEEVLSNKAGGPQGSRSCWCLSLFSFLLVAGATTLFCLLHFGVIGPQREEQSPAGPSFNRPLVQTLRSSSQASNNKPVAHVVANISAPGQLRWGDSYANALMANGVELKDNQLVVPTDGLYLIYSQVLFRGHGCPSTPLFLTHTISRIAVSYQTKVNILSAIKSPCHRETLEGAEAKPWYEPIYQGGVFQLEKGDRLSAEINLPEYLDYAESGQVYFGIIAL</sequence>
<accession>P23383</accession>